<comment type="function">
    <text evidence="1">Specifically catalyzes the NAD or NADP-dependent dehydrogenation of L-aspartate to iminoaspartate.</text>
</comment>
<comment type="catalytic activity">
    <reaction evidence="1">
        <text>L-aspartate + NADP(+) + H2O = oxaloacetate + NH4(+) + NADPH + H(+)</text>
        <dbReference type="Rhea" id="RHEA:11784"/>
        <dbReference type="ChEBI" id="CHEBI:15377"/>
        <dbReference type="ChEBI" id="CHEBI:15378"/>
        <dbReference type="ChEBI" id="CHEBI:16452"/>
        <dbReference type="ChEBI" id="CHEBI:28938"/>
        <dbReference type="ChEBI" id="CHEBI:29991"/>
        <dbReference type="ChEBI" id="CHEBI:57783"/>
        <dbReference type="ChEBI" id="CHEBI:58349"/>
        <dbReference type="EC" id="1.4.1.21"/>
    </reaction>
</comment>
<comment type="catalytic activity">
    <reaction evidence="1">
        <text>L-aspartate + NAD(+) + H2O = oxaloacetate + NH4(+) + NADH + H(+)</text>
        <dbReference type="Rhea" id="RHEA:11788"/>
        <dbReference type="ChEBI" id="CHEBI:15377"/>
        <dbReference type="ChEBI" id="CHEBI:15378"/>
        <dbReference type="ChEBI" id="CHEBI:16452"/>
        <dbReference type="ChEBI" id="CHEBI:28938"/>
        <dbReference type="ChEBI" id="CHEBI:29991"/>
        <dbReference type="ChEBI" id="CHEBI:57540"/>
        <dbReference type="ChEBI" id="CHEBI:57945"/>
        <dbReference type="EC" id="1.4.1.21"/>
    </reaction>
</comment>
<comment type="pathway">
    <text evidence="1">Cofactor biosynthesis; NAD(+) biosynthesis; iminoaspartate from L-aspartate (dehydrogenase route): step 1/1.</text>
</comment>
<comment type="miscellaneous">
    <text evidence="1">The iminoaspartate product is unstable in aqueous solution and can decompose to oxaloacetate and ammonia.</text>
</comment>
<comment type="similarity">
    <text evidence="1">Belongs to the L-aspartate dehydrogenase family.</text>
</comment>
<organism>
    <name type="scientific">Pseudomonas aeruginosa (strain ATCC 15692 / DSM 22644 / CIP 104116 / JCM 14847 / LMG 12228 / 1C / PRS 101 / PAO1)</name>
    <dbReference type="NCBI Taxonomy" id="208964"/>
    <lineage>
        <taxon>Bacteria</taxon>
        <taxon>Pseudomonadati</taxon>
        <taxon>Pseudomonadota</taxon>
        <taxon>Gammaproteobacteria</taxon>
        <taxon>Pseudomonadales</taxon>
        <taxon>Pseudomonadaceae</taxon>
        <taxon>Pseudomonas</taxon>
    </lineage>
</organism>
<sequence length="267" mass="27920">MLNIVMIGCGAIGAGVLELLENDPQLRVDAVIVPRDSETQVRHRLASLRRPPRVLSALPAGERPDLLVECAGHRAIEQHVLPALAQGIPCLVVSVGALSEPGLVERLEAAAQAGGSRIELLPGAIGAIDALSAARVGGLESVRYTGRKPASAWLGTPGETVCDLQRLEKARVIFDGSAREAARLYPKNANVAATLSLAGLGLDRTQVRLIADPESCENVHQVEASGAFGGFELTLRGKPLAANPKTSALTVYSVVRALGNHAHAISI</sequence>
<feature type="chain" id="PRO_0000144890" description="L-aspartate dehydrogenase">
    <location>
        <begin position="1"/>
        <end position="267"/>
    </location>
</feature>
<feature type="active site" evidence="1">
    <location>
        <position position="220"/>
    </location>
</feature>
<feature type="binding site" evidence="1">
    <location>
        <position position="124"/>
    </location>
    <ligand>
        <name>NAD(+)</name>
        <dbReference type="ChEBI" id="CHEBI:57540"/>
    </ligand>
</feature>
<feature type="binding site" evidence="1">
    <location>
        <position position="190"/>
    </location>
    <ligand>
        <name>NAD(+)</name>
        <dbReference type="ChEBI" id="CHEBI:57540"/>
    </ligand>
</feature>
<reference key="1">
    <citation type="journal article" date="2000" name="Nature">
        <title>Complete genome sequence of Pseudomonas aeruginosa PAO1, an opportunistic pathogen.</title>
        <authorList>
            <person name="Stover C.K."/>
            <person name="Pham X.-Q.T."/>
            <person name="Erwin A.L."/>
            <person name="Mizoguchi S.D."/>
            <person name="Warrener P."/>
            <person name="Hickey M.J."/>
            <person name="Brinkman F.S.L."/>
            <person name="Hufnagle W.O."/>
            <person name="Kowalik D.J."/>
            <person name="Lagrou M."/>
            <person name="Garber R.L."/>
            <person name="Goltry L."/>
            <person name="Tolentino E."/>
            <person name="Westbrock-Wadman S."/>
            <person name="Yuan Y."/>
            <person name="Brody L.L."/>
            <person name="Coulter S.N."/>
            <person name="Folger K.R."/>
            <person name="Kas A."/>
            <person name="Larbig K."/>
            <person name="Lim R.M."/>
            <person name="Smith K.A."/>
            <person name="Spencer D.H."/>
            <person name="Wong G.K.-S."/>
            <person name="Wu Z."/>
            <person name="Paulsen I.T."/>
            <person name="Reizer J."/>
            <person name="Saier M.H. Jr."/>
            <person name="Hancock R.E.W."/>
            <person name="Lory S."/>
            <person name="Olson M.V."/>
        </authorList>
    </citation>
    <scope>NUCLEOTIDE SEQUENCE [LARGE SCALE GENOMIC DNA]</scope>
    <source>
        <strain>ATCC 15692 / DSM 22644 / CIP 104116 / JCM 14847 / LMG 12228 / 1C / PRS 101 / PAO1</strain>
    </source>
</reference>
<protein>
    <recommendedName>
        <fullName evidence="1">L-aspartate dehydrogenase</fullName>
        <ecNumber evidence="1">1.4.1.21</ecNumber>
    </recommendedName>
</protein>
<evidence type="ECO:0000255" key="1">
    <source>
        <dbReference type="HAMAP-Rule" id="MF_01265"/>
    </source>
</evidence>
<keyword id="KW-0520">NAD</keyword>
<keyword id="KW-0521">NADP</keyword>
<keyword id="KW-0560">Oxidoreductase</keyword>
<keyword id="KW-0662">Pyridine nucleotide biosynthesis</keyword>
<keyword id="KW-1185">Reference proteome</keyword>
<name>ASPD_PSEAE</name>
<dbReference type="EC" id="1.4.1.21" evidence="1"/>
<dbReference type="EMBL" id="AE004091">
    <property type="protein sequence ID" value="AAG06893.1"/>
    <property type="molecule type" value="Genomic_DNA"/>
</dbReference>
<dbReference type="PIR" id="G83206">
    <property type="entry name" value="G83206"/>
</dbReference>
<dbReference type="RefSeq" id="NP_252195.1">
    <property type="nucleotide sequence ID" value="NC_002516.2"/>
</dbReference>
<dbReference type="RefSeq" id="WP_003112905.1">
    <property type="nucleotide sequence ID" value="NZ_QZGE01000001.1"/>
</dbReference>
<dbReference type="SMR" id="Q9HYA4"/>
<dbReference type="STRING" id="208964.PA3505"/>
<dbReference type="PaxDb" id="208964-PA3505"/>
<dbReference type="GeneID" id="879175"/>
<dbReference type="KEGG" id="pae:PA3505"/>
<dbReference type="PATRIC" id="fig|208964.12.peg.3669"/>
<dbReference type="PseudoCAP" id="PA3505"/>
<dbReference type="HOGENOM" id="CLU_089550_0_0_6"/>
<dbReference type="InParanoid" id="Q9HYA4"/>
<dbReference type="OrthoDB" id="7056904at2"/>
<dbReference type="PhylomeDB" id="Q9HYA4"/>
<dbReference type="BioCyc" id="MetaCyc:MONOMER-21957"/>
<dbReference type="BioCyc" id="PAER208964:G1FZ6-3573-MONOMER"/>
<dbReference type="BRENDA" id="1.4.1.21">
    <property type="organism ID" value="5087"/>
</dbReference>
<dbReference type="UniPathway" id="UPA00253">
    <property type="reaction ID" value="UER00456"/>
</dbReference>
<dbReference type="Proteomes" id="UP000002438">
    <property type="component" value="Chromosome"/>
</dbReference>
<dbReference type="GO" id="GO:0033735">
    <property type="term" value="F:aspartate dehydrogenase activity"/>
    <property type="evidence" value="ECO:0007669"/>
    <property type="project" value="UniProtKB-EC"/>
</dbReference>
<dbReference type="GO" id="GO:0051287">
    <property type="term" value="F:NAD binding"/>
    <property type="evidence" value="ECO:0007669"/>
    <property type="project" value="UniProtKB-UniRule"/>
</dbReference>
<dbReference type="GO" id="GO:0050661">
    <property type="term" value="F:NADP binding"/>
    <property type="evidence" value="ECO:0007669"/>
    <property type="project" value="UniProtKB-UniRule"/>
</dbReference>
<dbReference type="GO" id="GO:0016639">
    <property type="term" value="F:oxidoreductase activity, acting on the CH-NH2 group of donors, NAD or NADP as acceptor"/>
    <property type="evidence" value="ECO:0007669"/>
    <property type="project" value="UniProtKB-UniRule"/>
</dbReference>
<dbReference type="GO" id="GO:0009435">
    <property type="term" value="P:NAD biosynthetic process"/>
    <property type="evidence" value="ECO:0007669"/>
    <property type="project" value="UniProtKB-UniRule"/>
</dbReference>
<dbReference type="Gene3D" id="3.30.360.10">
    <property type="entry name" value="Dihydrodipicolinate Reductase, domain 2"/>
    <property type="match status" value="1"/>
</dbReference>
<dbReference type="Gene3D" id="3.40.50.720">
    <property type="entry name" value="NAD(P)-binding Rossmann-like Domain"/>
    <property type="match status" value="1"/>
</dbReference>
<dbReference type="HAMAP" id="MF_01265">
    <property type="entry name" value="NadX"/>
    <property type="match status" value="1"/>
</dbReference>
<dbReference type="InterPro" id="IPR005106">
    <property type="entry name" value="Asp/hSer_DH_NAD-bd"/>
</dbReference>
<dbReference type="InterPro" id="IPR002811">
    <property type="entry name" value="Asp_DH"/>
</dbReference>
<dbReference type="InterPro" id="IPR020626">
    <property type="entry name" value="Asp_DH_prok"/>
</dbReference>
<dbReference type="InterPro" id="IPR011182">
    <property type="entry name" value="L-Asp_DH"/>
</dbReference>
<dbReference type="InterPro" id="IPR036291">
    <property type="entry name" value="NAD(P)-bd_dom_sf"/>
</dbReference>
<dbReference type="NCBIfam" id="NF009827">
    <property type="entry name" value="PRK13303.1-2"/>
    <property type="match status" value="1"/>
</dbReference>
<dbReference type="NCBIfam" id="NF009828">
    <property type="entry name" value="PRK13303.1-3"/>
    <property type="match status" value="1"/>
</dbReference>
<dbReference type="PANTHER" id="PTHR31873:SF6">
    <property type="entry name" value="ASPARTATE DEHYDROGENASE DOMAIN-CONTAINING PROTEIN"/>
    <property type="match status" value="1"/>
</dbReference>
<dbReference type="PANTHER" id="PTHR31873">
    <property type="entry name" value="L-ASPARTATE DEHYDROGENASE-RELATED"/>
    <property type="match status" value="1"/>
</dbReference>
<dbReference type="Pfam" id="PF01958">
    <property type="entry name" value="Asp_DH_C"/>
    <property type="match status" value="1"/>
</dbReference>
<dbReference type="Pfam" id="PF03447">
    <property type="entry name" value="NAD_binding_3"/>
    <property type="match status" value="1"/>
</dbReference>
<dbReference type="PIRSF" id="PIRSF005227">
    <property type="entry name" value="Asp_dh_NAD_syn"/>
    <property type="match status" value="1"/>
</dbReference>
<dbReference type="SUPFAM" id="SSF55347">
    <property type="entry name" value="Glyceraldehyde-3-phosphate dehydrogenase-like, C-terminal domain"/>
    <property type="match status" value="1"/>
</dbReference>
<dbReference type="SUPFAM" id="SSF51735">
    <property type="entry name" value="NAD(P)-binding Rossmann-fold domains"/>
    <property type="match status" value="1"/>
</dbReference>
<gene>
    <name evidence="1" type="primary">nadX</name>
    <name type="ordered locus">PA3505</name>
</gene>
<proteinExistence type="inferred from homology"/>
<accession>Q9HYA4</accession>